<evidence type="ECO:0000255" key="1">
    <source>
        <dbReference type="HAMAP-Rule" id="MF_01399"/>
    </source>
</evidence>
<accession>Q46J54</accession>
<sequence length="153" mass="17239">MPTLFLFGASEGGLFDFDATLPLMAVQVVLLTFILNALFFKPVGRVVEEREDYVNTSRAEAKKKIAEVELLETELKDQLKEARLEAQKVILEAEQDSENLYKEALALATSEANASREKARREIDSQRDEALNQLKNEADNLGDLIIERLLAKK</sequence>
<keyword id="KW-0066">ATP synthesis</keyword>
<keyword id="KW-0138">CF(0)</keyword>
<keyword id="KW-0375">Hydrogen ion transport</keyword>
<keyword id="KW-0406">Ion transport</keyword>
<keyword id="KW-0472">Membrane</keyword>
<keyword id="KW-1185">Reference proteome</keyword>
<keyword id="KW-0793">Thylakoid</keyword>
<keyword id="KW-0812">Transmembrane</keyword>
<keyword id="KW-1133">Transmembrane helix</keyword>
<keyword id="KW-0813">Transport</keyword>
<reference key="1">
    <citation type="journal article" date="2007" name="PLoS Genet.">
        <title>Patterns and implications of gene gain and loss in the evolution of Prochlorococcus.</title>
        <authorList>
            <person name="Kettler G.C."/>
            <person name="Martiny A.C."/>
            <person name="Huang K."/>
            <person name="Zucker J."/>
            <person name="Coleman M.L."/>
            <person name="Rodrigue S."/>
            <person name="Chen F."/>
            <person name="Lapidus A."/>
            <person name="Ferriera S."/>
            <person name="Johnson J."/>
            <person name="Steglich C."/>
            <person name="Church G.M."/>
            <person name="Richardson P."/>
            <person name="Chisholm S.W."/>
        </authorList>
    </citation>
    <scope>NUCLEOTIDE SEQUENCE [LARGE SCALE GENOMIC DNA]</scope>
    <source>
        <strain>NATL2A</strain>
    </source>
</reference>
<dbReference type="EMBL" id="CP000095">
    <property type="protein sequence ID" value="AAZ58474.1"/>
    <property type="molecule type" value="Genomic_DNA"/>
</dbReference>
<dbReference type="RefSeq" id="WP_011295330.1">
    <property type="nucleotide sequence ID" value="NC_007335.2"/>
</dbReference>
<dbReference type="SMR" id="Q46J54"/>
<dbReference type="STRING" id="59920.PMN2A_0984"/>
<dbReference type="KEGG" id="pmn:PMN2A_0984"/>
<dbReference type="HOGENOM" id="CLU_079215_9_0_3"/>
<dbReference type="OrthoDB" id="426571at2"/>
<dbReference type="Proteomes" id="UP000002535">
    <property type="component" value="Chromosome"/>
</dbReference>
<dbReference type="GO" id="GO:0031676">
    <property type="term" value="C:plasma membrane-derived thylakoid membrane"/>
    <property type="evidence" value="ECO:0007669"/>
    <property type="project" value="UniProtKB-SubCell"/>
</dbReference>
<dbReference type="GO" id="GO:0045259">
    <property type="term" value="C:proton-transporting ATP synthase complex"/>
    <property type="evidence" value="ECO:0007669"/>
    <property type="project" value="UniProtKB-KW"/>
</dbReference>
<dbReference type="GO" id="GO:0046933">
    <property type="term" value="F:proton-transporting ATP synthase activity, rotational mechanism"/>
    <property type="evidence" value="ECO:0007669"/>
    <property type="project" value="UniProtKB-UniRule"/>
</dbReference>
<dbReference type="GO" id="GO:0046961">
    <property type="term" value="F:proton-transporting ATPase activity, rotational mechanism"/>
    <property type="evidence" value="ECO:0007669"/>
    <property type="project" value="TreeGrafter"/>
</dbReference>
<dbReference type="CDD" id="cd06503">
    <property type="entry name" value="ATP-synt_Fo_b"/>
    <property type="match status" value="1"/>
</dbReference>
<dbReference type="Gene3D" id="1.20.5.620">
    <property type="entry name" value="F1F0 ATP synthase subunit B, membrane domain"/>
    <property type="match status" value="1"/>
</dbReference>
<dbReference type="HAMAP" id="MF_01398">
    <property type="entry name" value="ATP_synth_b_bprime"/>
    <property type="match status" value="1"/>
</dbReference>
<dbReference type="HAMAP" id="MF_01399">
    <property type="entry name" value="ATP_synth_bprime"/>
    <property type="match status" value="1"/>
</dbReference>
<dbReference type="InterPro" id="IPR034679">
    <property type="entry name" value="ATP_synth_b"/>
</dbReference>
<dbReference type="InterPro" id="IPR028987">
    <property type="entry name" value="ATP_synth_B-like_membr_sf"/>
</dbReference>
<dbReference type="InterPro" id="IPR002146">
    <property type="entry name" value="ATP_synth_b/b'su_bac/chlpt"/>
</dbReference>
<dbReference type="InterPro" id="IPR050059">
    <property type="entry name" value="ATP_synthase_B_chain"/>
</dbReference>
<dbReference type="NCBIfam" id="NF005607">
    <property type="entry name" value="PRK07353.1"/>
    <property type="match status" value="1"/>
</dbReference>
<dbReference type="PANTHER" id="PTHR33445">
    <property type="entry name" value="ATP SYNTHASE SUBUNIT B', CHLOROPLASTIC"/>
    <property type="match status" value="1"/>
</dbReference>
<dbReference type="PANTHER" id="PTHR33445:SF2">
    <property type="entry name" value="ATP SYNTHASE SUBUNIT B', CHLOROPLASTIC"/>
    <property type="match status" value="1"/>
</dbReference>
<dbReference type="Pfam" id="PF00430">
    <property type="entry name" value="ATP-synt_B"/>
    <property type="match status" value="1"/>
</dbReference>
<dbReference type="SUPFAM" id="SSF81573">
    <property type="entry name" value="F1F0 ATP synthase subunit B, membrane domain"/>
    <property type="match status" value="1"/>
</dbReference>
<comment type="function">
    <text evidence="1">F(1)F(0) ATP synthase produces ATP from ADP in the presence of a proton or sodium gradient. F-type ATPases consist of two structural domains, F(1) containing the extramembraneous catalytic core and F(0) containing the membrane proton channel, linked together by a central stalk and a peripheral stalk. During catalysis, ATP synthesis in the catalytic domain of F(1) is coupled via a rotary mechanism of the central stalk subunits to proton translocation.</text>
</comment>
<comment type="function">
    <text evidence="1">Component of the F(0) channel, it forms part of the peripheral stalk, linking F(1) to F(0). The b'-subunit is a diverged and duplicated form of b found in plants and photosynthetic bacteria.</text>
</comment>
<comment type="subunit">
    <text evidence="1">F-type ATPases have 2 components, F(1) - the catalytic core - and F(0) - the membrane proton channel. F(1) has five subunits: alpha(3), beta(3), gamma(1), delta(1), epsilon(1). F(0) has four main subunits: a(1), b(1), b'(1) and c(10-14). The alpha and beta chains form an alternating ring which encloses part of the gamma chain. F(1) is attached to F(0) by a central stalk formed by the gamma and epsilon chains, while a peripheral stalk is formed by the delta, b and b' chains.</text>
</comment>
<comment type="subcellular location">
    <subcellularLocation>
        <location evidence="1">Cellular thylakoid membrane</location>
        <topology evidence="1">Single-pass membrane protein</topology>
    </subcellularLocation>
</comment>
<comment type="similarity">
    <text evidence="1">Belongs to the ATPase B chain family.</text>
</comment>
<feature type="chain" id="PRO_0000369029" description="ATP synthase subunit b'">
    <location>
        <begin position="1"/>
        <end position="153"/>
    </location>
</feature>
<feature type="transmembrane region" description="Helical" evidence="1">
    <location>
        <begin position="20"/>
        <end position="40"/>
    </location>
</feature>
<proteinExistence type="inferred from homology"/>
<protein>
    <recommendedName>
        <fullName evidence="1">ATP synthase subunit b'</fullName>
    </recommendedName>
    <alternativeName>
        <fullName evidence="1">ATP synthase F(0) sector subunit b'</fullName>
    </alternativeName>
    <alternativeName>
        <fullName evidence="1">ATPase subunit II</fullName>
    </alternativeName>
    <alternativeName>
        <fullName evidence="1">F-type ATPase subunit b'</fullName>
        <shortName evidence="1">F-ATPase subunit b'</shortName>
    </alternativeName>
</protein>
<gene>
    <name evidence="1" type="primary">atpF2</name>
    <name evidence="1" type="synonym">atpG</name>
    <name type="ordered locus">PMN2A_0984</name>
</gene>
<organism>
    <name type="scientific">Prochlorococcus marinus (strain NATL2A)</name>
    <dbReference type="NCBI Taxonomy" id="59920"/>
    <lineage>
        <taxon>Bacteria</taxon>
        <taxon>Bacillati</taxon>
        <taxon>Cyanobacteriota</taxon>
        <taxon>Cyanophyceae</taxon>
        <taxon>Synechococcales</taxon>
        <taxon>Prochlorococcaceae</taxon>
        <taxon>Prochlorococcus</taxon>
    </lineage>
</organism>
<name>ATPF2_PROMT</name>